<sequence>MNNSNRLRLTWISYFSYALTGALVIVTGMVMGNIAEYFNLPIASMSNTFTFLNAGILISIFLNAWLMEIIPLKRQLVFGFILMLIAIAGLMVGHNLMIFSISMFILGVVSGITMSIGTFLITHMYEGRQRGSRLLFTDSFFSMAGMIFPVAAAILLARHIEWYWVYACIGLLYVGIFVLTLCSEFPVLGHKATDQSKPVAKEKWGMGVLFLAIAALCYILGQLGFIQWVPEYATKTFNMDISQAGQLVSNFWISYMIGMWVFSFILRFFDLQRIVTVLAALATLSMYMFVSTNNPEHLSYYILALGFVSSAIYTTLITLGSLQTKVSSPKLVNFILTCGTVGTMLTFVVTGPIVANSGVHAALATANGLYLTVFVMCLILGFFTKHRSHGHVTH</sequence>
<name>TSGA_YERE8</name>
<dbReference type="EMBL" id="AM286415">
    <property type="protein sequence ID" value="CAL13982.1"/>
    <property type="molecule type" value="Genomic_DNA"/>
</dbReference>
<dbReference type="RefSeq" id="WP_011817338.1">
    <property type="nucleotide sequence ID" value="NC_008800.1"/>
</dbReference>
<dbReference type="RefSeq" id="YP_001008108.1">
    <property type="nucleotide sequence ID" value="NC_008800.1"/>
</dbReference>
<dbReference type="SMR" id="A1JSB0"/>
<dbReference type="KEGG" id="yen:YE3963"/>
<dbReference type="PATRIC" id="fig|393305.7.peg.4216"/>
<dbReference type="eggNOG" id="COG0738">
    <property type="taxonomic scope" value="Bacteria"/>
</dbReference>
<dbReference type="HOGENOM" id="CLU_056916_0_0_6"/>
<dbReference type="OrthoDB" id="8577032at2"/>
<dbReference type="Proteomes" id="UP000000642">
    <property type="component" value="Chromosome"/>
</dbReference>
<dbReference type="GO" id="GO:0005886">
    <property type="term" value="C:plasma membrane"/>
    <property type="evidence" value="ECO:0007669"/>
    <property type="project" value="UniProtKB-SubCell"/>
</dbReference>
<dbReference type="GO" id="GO:0022857">
    <property type="term" value="F:transmembrane transporter activity"/>
    <property type="evidence" value="ECO:0007669"/>
    <property type="project" value="InterPro"/>
</dbReference>
<dbReference type="Gene3D" id="1.20.1250.20">
    <property type="entry name" value="MFS general substrate transporter like domains"/>
    <property type="match status" value="2"/>
</dbReference>
<dbReference type="HAMAP" id="MF_01044">
    <property type="entry name" value="MFS_TsgA"/>
    <property type="match status" value="1"/>
</dbReference>
<dbReference type="InterPro" id="IPR011701">
    <property type="entry name" value="MFS"/>
</dbReference>
<dbReference type="InterPro" id="IPR020846">
    <property type="entry name" value="MFS_dom"/>
</dbReference>
<dbReference type="InterPro" id="IPR036259">
    <property type="entry name" value="MFS_trans_sf"/>
</dbReference>
<dbReference type="InterPro" id="IPR023528">
    <property type="entry name" value="MFS_TsgA"/>
</dbReference>
<dbReference type="InterPro" id="IPR050375">
    <property type="entry name" value="MFS_TsgA-like"/>
</dbReference>
<dbReference type="NCBIfam" id="NF002982">
    <property type="entry name" value="PRK03699.1"/>
    <property type="match status" value="1"/>
</dbReference>
<dbReference type="PANTHER" id="PTHR43702">
    <property type="entry name" value="L-FUCOSE-PROTON SYMPORTER"/>
    <property type="match status" value="1"/>
</dbReference>
<dbReference type="PANTHER" id="PTHR43702:SF3">
    <property type="entry name" value="PROTEIN TSGA"/>
    <property type="match status" value="1"/>
</dbReference>
<dbReference type="Pfam" id="PF07690">
    <property type="entry name" value="MFS_1"/>
    <property type="match status" value="1"/>
</dbReference>
<dbReference type="SUPFAM" id="SSF103473">
    <property type="entry name" value="MFS general substrate transporter"/>
    <property type="match status" value="1"/>
</dbReference>
<dbReference type="PROSITE" id="PS50850">
    <property type="entry name" value="MFS"/>
    <property type="match status" value="1"/>
</dbReference>
<keyword id="KW-0997">Cell inner membrane</keyword>
<keyword id="KW-1003">Cell membrane</keyword>
<keyword id="KW-0472">Membrane</keyword>
<keyword id="KW-0812">Transmembrane</keyword>
<keyword id="KW-1133">Transmembrane helix</keyword>
<accession>A1JSB0</accession>
<organism>
    <name type="scientific">Yersinia enterocolitica serotype O:8 / biotype 1B (strain NCTC 13174 / 8081)</name>
    <dbReference type="NCBI Taxonomy" id="393305"/>
    <lineage>
        <taxon>Bacteria</taxon>
        <taxon>Pseudomonadati</taxon>
        <taxon>Pseudomonadota</taxon>
        <taxon>Gammaproteobacteria</taxon>
        <taxon>Enterobacterales</taxon>
        <taxon>Yersiniaceae</taxon>
        <taxon>Yersinia</taxon>
    </lineage>
</organism>
<comment type="subcellular location">
    <subcellularLocation>
        <location evidence="1">Cell inner membrane</location>
        <topology evidence="1">Multi-pass membrane protein</topology>
    </subcellularLocation>
</comment>
<comment type="similarity">
    <text evidence="1">Belongs to the major facilitator superfamily. TsgA family.</text>
</comment>
<evidence type="ECO:0000255" key="1">
    <source>
        <dbReference type="HAMAP-Rule" id="MF_01044"/>
    </source>
</evidence>
<proteinExistence type="inferred from homology"/>
<reference key="1">
    <citation type="journal article" date="2006" name="PLoS Genet.">
        <title>The complete genome sequence and comparative genome analysis of the high pathogenicity Yersinia enterocolitica strain 8081.</title>
        <authorList>
            <person name="Thomson N.R."/>
            <person name="Howard S."/>
            <person name="Wren B.W."/>
            <person name="Holden M.T.G."/>
            <person name="Crossman L."/>
            <person name="Challis G.L."/>
            <person name="Churcher C."/>
            <person name="Mungall K."/>
            <person name="Brooks K."/>
            <person name="Chillingworth T."/>
            <person name="Feltwell T."/>
            <person name="Abdellah Z."/>
            <person name="Hauser H."/>
            <person name="Jagels K."/>
            <person name="Maddison M."/>
            <person name="Moule S."/>
            <person name="Sanders M."/>
            <person name="Whitehead S."/>
            <person name="Quail M.A."/>
            <person name="Dougan G."/>
            <person name="Parkhill J."/>
            <person name="Prentice M.B."/>
        </authorList>
    </citation>
    <scope>NUCLEOTIDE SEQUENCE [LARGE SCALE GENOMIC DNA]</scope>
    <source>
        <strain>NCTC 13174 / 8081</strain>
    </source>
</reference>
<gene>
    <name evidence="1" type="primary">tsgA</name>
    <name type="ordered locus">YE3963</name>
</gene>
<protein>
    <recommendedName>
        <fullName evidence="1">Protein TsgA homolog</fullName>
    </recommendedName>
</protein>
<feature type="chain" id="PRO_1000064256" description="Protein TsgA homolog">
    <location>
        <begin position="1"/>
        <end position="394"/>
    </location>
</feature>
<feature type="transmembrane region" description="Helical" evidence="1">
    <location>
        <begin position="11"/>
        <end position="31"/>
    </location>
</feature>
<feature type="transmembrane region" description="Helical" evidence="1">
    <location>
        <begin position="51"/>
        <end position="71"/>
    </location>
</feature>
<feature type="transmembrane region" description="Helical" evidence="1">
    <location>
        <begin position="76"/>
        <end position="96"/>
    </location>
</feature>
<feature type="transmembrane region" description="Helical" evidence="1">
    <location>
        <begin position="101"/>
        <end position="121"/>
    </location>
</feature>
<feature type="transmembrane region" description="Helical" evidence="1">
    <location>
        <begin position="134"/>
        <end position="154"/>
    </location>
</feature>
<feature type="transmembrane region" description="Helical" evidence="1">
    <location>
        <begin position="162"/>
        <end position="182"/>
    </location>
</feature>
<feature type="transmembrane region" description="Helical" evidence="1">
    <location>
        <begin position="206"/>
        <end position="226"/>
    </location>
</feature>
<feature type="transmembrane region" description="Helical" evidence="1">
    <location>
        <begin position="246"/>
        <end position="266"/>
    </location>
</feature>
<feature type="transmembrane region" description="Helical" evidence="1">
    <location>
        <begin position="274"/>
        <end position="294"/>
    </location>
</feature>
<feature type="transmembrane region" description="Helical" evidence="1">
    <location>
        <begin position="302"/>
        <end position="322"/>
    </location>
</feature>
<feature type="transmembrane region" description="Helical" evidence="1">
    <location>
        <begin position="334"/>
        <end position="354"/>
    </location>
</feature>
<feature type="transmembrane region" description="Helical" evidence="1">
    <location>
        <begin position="363"/>
        <end position="383"/>
    </location>
</feature>